<dbReference type="EC" id="2.3.2.23"/>
<dbReference type="EMBL" id="AY653733">
    <property type="protein sequence ID" value="AAV50969.1"/>
    <property type="molecule type" value="Genomic_DNA"/>
</dbReference>
<dbReference type="SMR" id="Q5UQ57"/>
<dbReference type="KEGG" id="vg:9925362"/>
<dbReference type="OrthoDB" id="11770at10239"/>
<dbReference type="UniPathway" id="UPA00143"/>
<dbReference type="Proteomes" id="UP000001134">
    <property type="component" value="Genome"/>
</dbReference>
<dbReference type="GO" id="GO:0005524">
    <property type="term" value="F:ATP binding"/>
    <property type="evidence" value="ECO:0007669"/>
    <property type="project" value="UniProtKB-KW"/>
</dbReference>
<dbReference type="GO" id="GO:0061631">
    <property type="term" value="F:ubiquitin conjugating enzyme activity"/>
    <property type="evidence" value="ECO:0007669"/>
    <property type="project" value="UniProtKB-EC"/>
</dbReference>
<dbReference type="GO" id="GO:0016567">
    <property type="term" value="P:protein ubiquitination"/>
    <property type="evidence" value="ECO:0007669"/>
    <property type="project" value="UniProtKB-UniPathway"/>
</dbReference>
<dbReference type="CDD" id="cd23799">
    <property type="entry name" value="UBCc_UBE2J"/>
    <property type="match status" value="1"/>
</dbReference>
<dbReference type="Gene3D" id="3.10.110.10">
    <property type="entry name" value="Ubiquitin Conjugating Enzyme"/>
    <property type="match status" value="1"/>
</dbReference>
<dbReference type="InterPro" id="IPR050113">
    <property type="entry name" value="Ub_conjugating_enzyme"/>
</dbReference>
<dbReference type="InterPro" id="IPR000608">
    <property type="entry name" value="UBQ-conjugat_E2_core"/>
</dbReference>
<dbReference type="InterPro" id="IPR016135">
    <property type="entry name" value="UBQ-conjugating_enzyme/RWD"/>
</dbReference>
<dbReference type="PANTHER" id="PTHR24067">
    <property type="entry name" value="UBIQUITIN-CONJUGATING ENZYME E2"/>
    <property type="match status" value="1"/>
</dbReference>
<dbReference type="Pfam" id="PF00179">
    <property type="entry name" value="UQ_con"/>
    <property type="match status" value="1"/>
</dbReference>
<dbReference type="SMART" id="SM00212">
    <property type="entry name" value="UBCc"/>
    <property type="match status" value="1"/>
</dbReference>
<dbReference type="SUPFAM" id="SSF54495">
    <property type="entry name" value="UBC-like"/>
    <property type="match status" value="1"/>
</dbReference>
<dbReference type="PROSITE" id="PS50127">
    <property type="entry name" value="UBC_2"/>
    <property type="match status" value="1"/>
</dbReference>
<sequence length="388" mass="42724">MQNVHKRVIKDINDGMKNLKQEFGIYLAPEEDDFYKVHFILQGPEGTPFEGGLYHGMIRLNNDHPFRPPNLHMITPSGRFEAEKYPISPNSRGICTTATSFHPESWTSMNNLETVLKGFVSLMCDPYDGGVGAVKSTDTQVKKLAQDSLTHIGNDLMVQKLFPDLYKAVNNGTFKPVKLAELSKIVYKEPTKPIVEEKSAKTSKSSTKTSVKSKKNQKSDSEEEENSDDDNTDSDSESDDFRDLDDVVDDSDQESDDESDSSSESENESGGSDDESDDGSDDESDDETSESDSESEEEKPVKKSTRKISKTTTKSSSTKPVKSIKSSKSTTTKPTKPTKSTKTTKSTKSTKSTKSTKPTESTKSSRSVKTTESSKSSKSSKSSKTGKK</sequence>
<accession>Q5UQ57</accession>
<evidence type="ECO:0000255" key="1">
    <source>
        <dbReference type="PROSITE-ProRule" id="PRU00388"/>
    </source>
</evidence>
<evidence type="ECO:0000256" key="2">
    <source>
        <dbReference type="SAM" id="MobiDB-lite"/>
    </source>
</evidence>
<protein>
    <recommendedName>
        <fullName>Probable ubiquitin-conjugating enzyme E2 L709</fullName>
        <ecNumber>2.3.2.23</ecNumber>
    </recommendedName>
    <alternativeName>
        <fullName>E2 ubiquitin-conjugating enzyme L709</fullName>
    </alternativeName>
    <alternativeName>
        <fullName>Ubiquitin carrier protein</fullName>
    </alternativeName>
    <alternativeName>
        <fullName>Ubiquitin-protein ligase</fullName>
    </alternativeName>
</protein>
<comment type="function">
    <text evidence="1">Catalyzes the covalent attachment of ubiquitin to other proteins.</text>
</comment>
<comment type="catalytic activity">
    <reaction evidence="1">
        <text>S-ubiquitinyl-[E1 ubiquitin-activating enzyme]-L-cysteine + [E2 ubiquitin-conjugating enzyme]-L-cysteine = [E1 ubiquitin-activating enzyme]-L-cysteine + S-ubiquitinyl-[E2 ubiquitin-conjugating enzyme]-L-cysteine.</text>
        <dbReference type="EC" id="2.3.2.23"/>
    </reaction>
</comment>
<comment type="pathway">
    <text evidence="1">Protein modification; protein ubiquitination.</text>
</comment>
<comment type="similarity">
    <text evidence="1">Belongs to the ubiquitin-conjugating enzyme family.</text>
</comment>
<organismHost>
    <name type="scientific">Acanthamoeba polyphaga</name>
    <name type="common">Amoeba</name>
    <dbReference type="NCBI Taxonomy" id="5757"/>
</organismHost>
<name>UBC2_MIMIV</name>
<keyword id="KW-0067">ATP-binding</keyword>
<keyword id="KW-0547">Nucleotide-binding</keyword>
<keyword id="KW-1185">Reference proteome</keyword>
<keyword id="KW-0808">Transferase</keyword>
<keyword id="KW-0833">Ubl conjugation pathway</keyword>
<proteinExistence type="inferred from homology"/>
<reference key="1">
    <citation type="journal article" date="2004" name="Science">
        <title>The 1.2-megabase genome sequence of Mimivirus.</title>
        <authorList>
            <person name="Raoult D."/>
            <person name="Audic S."/>
            <person name="Robert C."/>
            <person name="Abergel C."/>
            <person name="Renesto P."/>
            <person name="Ogata H."/>
            <person name="La Scola B."/>
            <person name="Susan M."/>
            <person name="Claverie J.-M."/>
        </authorList>
    </citation>
    <scope>NUCLEOTIDE SEQUENCE [LARGE SCALE GENOMIC DNA]</scope>
    <source>
        <strain>Rowbotham-Bradford</strain>
    </source>
</reference>
<organism>
    <name type="scientific">Acanthamoeba polyphaga mimivirus</name>
    <name type="common">APMV</name>
    <dbReference type="NCBI Taxonomy" id="212035"/>
    <lineage>
        <taxon>Viruses</taxon>
        <taxon>Varidnaviria</taxon>
        <taxon>Bamfordvirae</taxon>
        <taxon>Nucleocytoviricota</taxon>
        <taxon>Megaviricetes</taxon>
        <taxon>Imitervirales</taxon>
        <taxon>Mimiviridae</taxon>
        <taxon>Megamimivirinae</taxon>
        <taxon>Mimivirus</taxon>
        <taxon>Mimivirus bradfordmassiliense</taxon>
    </lineage>
</organism>
<gene>
    <name type="ordered locus">MIMI_L709</name>
</gene>
<feature type="chain" id="PRO_0000243981" description="Probable ubiquitin-conjugating enzyme E2 L709">
    <location>
        <begin position="1"/>
        <end position="388"/>
    </location>
</feature>
<feature type="domain" description="UBC core" evidence="1">
    <location>
        <begin position="3"/>
        <end position="162"/>
    </location>
</feature>
<feature type="region of interest" description="Disordered" evidence="2">
    <location>
        <begin position="195"/>
        <end position="388"/>
    </location>
</feature>
<feature type="compositionally biased region" description="Acidic residues" evidence="2">
    <location>
        <begin position="221"/>
        <end position="238"/>
    </location>
</feature>
<feature type="compositionally biased region" description="Acidic residues" evidence="2">
    <location>
        <begin position="246"/>
        <end position="297"/>
    </location>
</feature>
<feature type="compositionally biased region" description="Low complexity" evidence="2">
    <location>
        <begin position="310"/>
        <end position="388"/>
    </location>
</feature>
<feature type="active site" description="Glycyl thioester intermediate" evidence="1">
    <location>
        <position position="95"/>
    </location>
</feature>